<proteinExistence type="evidence at protein level"/>
<dbReference type="EMBL" id="AL132772">
    <property type="status" value="NOT_ANNOTATED_CDS"/>
    <property type="molecule type" value="Genomic_DNA"/>
</dbReference>
<dbReference type="EMBL" id="Z97053">
    <property type="status" value="NOT_ANNOTATED_CDS"/>
    <property type="molecule type" value="Genomic_DNA"/>
</dbReference>
<dbReference type="EMBL" id="CH471077">
    <property type="protein sequence ID" value="EAW75918.1"/>
    <property type="molecule type" value="Genomic_DNA"/>
</dbReference>
<dbReference type="EMBL" id="CH471077">
    <property type="protein sequence ID" value="EAW75919.1"/>
    <property type="molecule type" value="Genomic_DNA"/>
</dbReference>
<dbReference type="EMBL" id="BC003071">
    <property type="protein sequence ID" value="AAH03071.2"/>
    <property type="molecule type" value="mRNA"/>
</dbReference>
<dbReference type="CCDS" id="CCDS13332.2"/>
<dbReference type="RefSeq" id="NP_001034288.1">
    <property type="nucleotide sequence ID" value="NM_001039199.3"/>
</dbReference>
<dbReference type="RefSeq" id="NP_077307.2">
    <property type="nucleotide sequence ID" value="NM_024331.5"/>
</dbReference>
<dbReference type="RefSeq" id="XP_011527345.1">
    <property type="nucleotide sequence ID" value="XM_011529043.4"/>
</dbReference>
<dbReference type="RefSeq" id="XP_011527346.1">
    <property type="nucleotide sequence ID" value="XM_011529044.4"/>
</dbReference>
<dbReference type="RefSeq" id="XP_047296437.1">
    <property type="nucleotide sequence ID" value="XM_047440481.1"/>
</dbReference>
<dbReference type="RefSeq" id="XP_047296438.1">
    <property type="nucleotide sequence ID" value="XM_047440482.1"/>
</dbReference>
<dbReference type="RefSeq" id="XP_047296439.1">
    <property type="nucleotide sequence ID" value="XM_047440483.1"/>
</dbReference>
<dbReference type="RefSeq" id="XP_047296440.1">
    <property type="nucleotide sequence ID" value="XM_047440484.1"/>
</dbReference>
<dbReference type="RefSeq" id="XP_047296441.1">
    <property type="nucleotide sequence ID" value="XM_047440485.1"/>
</dbReference>
<dbReference type="RefSeq" id="XP_054179967.1">
    <property type="nucleotide sequence ID" value="XM_054323992.1"/>
</dbReference>
<dbReference type="RefSeq" id="XP_054179968.1">
    <property type="nucleotide sequence ID" value="XM_054323993.1"/>
</dbReference>
<dbReference type="RefSeq" id="XP_054179969.1">
    <property type="nucleotide sequence ID" value="XM_054323994.1"/>
</dbReference>
<dbReference type="RefSeq" id="XP_054179970.1">
    <property type="nucleotide sequence ID" value="XM_054323995.1"/>
</dbReference>
<dbReference type="RefSeq" id="XP_054179971.1">
    <property type="nucleotide sequence ID" value="XM_054323996.1"/>
</dbReference>
<dbReference type="RefSeq" id="XP_054179972.1">
    <property type="nucleotide sequence ID" value="XM_054323997.1"/>
</dbReference>
<dbReference type="RefSeq" id="XP_054179973.1">
    <property type="nucleotide sequence ID" value="XM_054323998.1"/>
</dbReference>
<dbReference type="SMR" id="Q9BTX7"/>
<dbReference type="BioGRID" id="122598">
    <property type="interactions" value="15"/>
</dbReference>
<dbReference type="FunCoup" id="Q9BTX7">
    <property type="interactions" value="395"/>
</dbReference>
<dbReference type="IntAct" id="Q9BTX7">
    <property type="interactions" value="8"/>
</dbReference>
<dbReference type="STRING" id="9606.ENSP00000361995"/>
<dbReference type="iPTMnet" id="Q9BTX7"/>
<dbReference type="PhosphoSitePlus" id="Q9BTX7"/>
<dbReference type="BioMuta" id="TTPAL"/>
<dbReference type="DMDM" id="76803550"/>
<dbReference type="jPOST" id="Q9BTX7"/>
<dbReference type="MassIVE" id="Q9BTX7"/>
<dbReference type="PaxDb" id="9606-ENSP00000361995"/>
<dbReference type="PeptideAtlas" id="Q9BTX7"/>
<dbReference type="ProteomicsDB" id="79028"/>
<dbReference type="Pumba" id="Q9BTX7"/>
<dbReference type="Antibodypedia" id="51852">
    <property type="antibodies" value="60 antibodies from 13 providers"/>
</dbReference>
<dbReference type="DNASU" id="79183"/>
<dbReference type="Ensembl" id="ENST00000262605.9">
    <property type="protein sequence ID" value="ENSP00000262605.4"/>
    <property type="gene ID" value="ENSG00000124120.11"/>
</dbReference>
<dbReference type="Ensembl" id="ENST00000372904.7">
    <property type="protein sequence ID" value="ENSP00000361995.3"/>
    <property type="gene ID" value="ENSG00000124120.11"/>
</dbReference>
<dbReference type="GeneID" id="79183"/>
<dbReference type="KEGG" id="hsa:79183"/>
<dbReference type="MANE-Select" id="ENST00000262605.9">
    <property type="protein sequence ID" value="ENSP00000262605.4"/>
    <property type="RefSeq nucleotide sequence ID" value="NM_001039199.3"/>
    <property type="RefSeq protein sequence ID" value="NP_001034288.1"/>
</dbReference>
<dbReference type="UCSC" id="uc002xmc.3">
    <property type="organism name" value="human"/>
</dbReference>
<dbReference type="AGR" id="HGNC:16114"/>
<dbReference type="CTD" id="79183"/>
<dbReference type="DisGeNET" id="79183"/>
<dbReference type="GeneCards" id="TTPAL"/>
<dbReference type="HGNC" id="HGNC:16114">
    <property type="gene designation" value="TTPAL"/>
</dbReference>
<dbReference type="HPA" id="ENSG00000124120">
    <property type="expression patterns" value="Tissue enhanced (liver)"/>
</dbReference>
<dbReference type="neXtProt" id="NX_Q9BTX7"/>
<dbReference type="OpenTargets" id="ENSG00000124120"/>
<dbReference type="PharmGKB" id="PA162407296"/>
<dbReference type="VEuPathDB" id="HostDB:ENSG00000124120"/>
<dbReference type="eggNOG" id="KOG1471">
    <property type="taxonomic scope" value="Eukaryota"/>
</dbReference>
<dbReference type="GeneTree" id="ENSGT00940000155407"/>
<dbReference type="InParanoid" id="Q9BTX7"/>
<dbReference type="OMA" id="VQCDDSM"/>
<dbReference type="OrthoDB" id="6682367at2759"/>
<dbReference type="PAN-GO" id="Q9BTX7">
    <property type="GO annotations" value="1 GO annotation based on evolutionary models"/>
</dbReference>
<dbReference type="PhylomeDB" id="Q9BTX7"/>
<dbReference type="PathwayCommons" id="Q9BTX7"/>
<dbReference type="SignaLink" id="Q9BTX7"/>
<dbReference type="BioGRID-ORCS" id="79183">
    <property type="hits" value="11 hits in 1157 CRISPR screens"/>
</dbReference>
<dbReference type="ChiTaRS" id="TTPAL">
    <property type="organism name" value="human"/>
</dbReference>
<dbReference type="GenomeRNAi" id="79183"/>
<dbReference type="Pharos" id="Q9BTX7">
    <property type="development level" value="Tdark"/>
</dbReference>
<dbReference type="PRO" id="PR:Q9BTX7"/>
<dbReference type="Proteomes" id="UP000005640">
    <property type="component" value="Chromosome 20"/>
</dbReference>
<dbReference type="RNAct" id="Q9BTX7">
    <property type="molecule type" value="protein"/>
</dbReference>
<dbReference type="Bgee" id="ENSG00000124120">
    <property type="expression patterns" value="Expressed in decidua and 179 other cell types or tissues"/>
</dbReference>
<dbReference type="ExpressionAtlas" id="Q9BTX7">
    <property type="expression patterns" value="baseline and differential"/>
</dbReference>
<dbReference type="GO" id="GO:0016020">
    <property type="term" value="C:membrane"/>
    <property type="evidence" value="ECO:0007005"/>
    <property type="project" value="UniProtKB"/>
</dbReference>
<dbReference type="GO" id="GO:1902936">
    <property type="term" value="F:phosphatidylinositol bisphosphate binding"/>
    <property type="evidence" value="ECO:0000318"/>
    <property type="project" value="GO_Central"/>
</dbReference>
<dbReference type="CDD" id="cd00170">
    <property type="entry name" value="SEC14"/>
    <property type="match status" value="1"/>
</dbReference>
<dbReference type="FunFam" id="1.10.8.20:FF:000001">
    <property type="entry name" value="Alpha-tocopherol transfer protein-like"/>
    <property type="match status" value="1"/>
</dbReference>
<dbReference type="FunFam" id="3.40.525.10:FF:000002">
    <property type="entry name" value="Alpha-tocopherol transfer protein-like"/>
    <property type="match status" value="1"/>
</dbReference>
<dbReference type="Gene3D" id="1.20.5.1200">
    <property type="entry name" value="Alpha-tocopherol transfer"/>
    <property type="match status" value="1"/>
</dbReference>
<dbReference type="Gene3D" id="3.40.525.10">
    <property type="entry name" value="CRAL-TRIO lipid binding domain"/>
    <property type="match status" value="1"/>
</dbReference>
<dbReference type="Gene3D" id="1.10.8.20">
    <property type="entry name" value="N-terminal domain of phosphatidylinositol transfer protein sec14p"/>
    <property type="match status" value="1"/>
</dbReference>
<dbReference type="InterPro" id="IPR001251">
    <property type="entry name" value="CRAL-TRIO_dom"/>
</dbReference>
<dbReference type="InterPro" id="IPR036865">
    <property type="entry name" value="CRAL-TRIO_dom_sf"/>
</dbReference>
<dbReference type="InterPro" id="IPR011074">
    <property type="entry name" value="CRAL/TRIO_N_dom"/>
</dbReference>
<dbReference type="InterPro" id="IPR036273">
    <property type="entry name" value="CRAL/TRIO_N_dom_sf"/>
</dbReference>
<dbReference type="PANTHER" id="PTHR10174:SF130">
    <property type="entry name" value="ALPHA-TOCOPHEROL TRANSFER PROTEIN-LIKE"/>
    <property type="match status" value="1"/>
</dbReference>
<dbReference type="PANTHER" id="PTHR10174">
    <property type="entry name" value="ALPHA-TOCOPHEROL TRANSFER PROTEIN-RELATED"/>
    <property type="match status" value="1"/>
</dbReference>
<dbReference type="Pfam" id="PF00650">
    <property type="entry name" value="CRAL_TRIO"/>
    <property type="match status" value="1"/>
</dbReference>
<dbReference type="Pfam" id="PF03765">
    <property type="entry name" value="CRAL_TRIO_N"/>
    <property type="match status" value="1"/>
</dbReference>
<dbReference type="PRINTS" id="PR00180">
    <property type="entry name" value="CRETINALDHBP"/>
</dbReference>
<dbReference type="SMART" id="SM01100">
    <property type="entry name" value="CRAL_TRIO_N"/>
    <property type="match status" value="1"/>
</dbReference>
<dbReference type="SMART" id="SM00516">
    <property type="entry name" value="SEC14"/>
    <property type="match status" value="1"/>
</dbReference>
<dbReference type="SUPFAM" id="SSF52087">
    <property type="entry name" value="CRAL/TRIO domain"/>
    <property type="match status" value="1"/>
</dbReference>
<dbReference type="SUPFAM" id="SSF46938">
    <property type="entry name" value="CRAL/TRIO N-terminal domain"/>
    <property type="match status" value="1"/>
</dbReference>
<dbReference type="PROSITE" id="PS50191">
    <property type="entry name" value="CRAL_TRIO"/>
    <property type="match status" value="1"/>
</dbReference>
<gene>
    <name type="primary">TTPAL</name>
    <name type="synonym">C20orf121</name>
</gene>
<comment type="function">
    <text evidence="3">May act as a protein that binds a hydrophobic ligand.</text>
</comment>
<feature type="chain" id="PRO_0000210772" description="Alpha-tocopherol transfer protein-like">
    <location>
        <begin position="1"/>
        <end position="342"/>
    </location>
</feature>
<feature type="domain" description="CRAL-TRIO" evidence="1">
    <location>
        <begin position="117"/>
        <end position="282"/>
    </location>
</feature>
<feature type="region of interest" description="Disordered" evidence="2">
    <location>
        <begin position="1"/>
        <end position="31"/>
    </location>
</feature>
<feature type="compositionally biased region" description="Polar residues" evidence="2">
    <location>
        <begin position="8"/>
        <end position="19"/>
    </location>
</feature>
<feature type="sequence variant" id="VAR_061788" description="In dbSNP:rs59069332.">
    <original>A</original>
    <variation>G</variation>
    <location>
        <position position="278"/>
    </location>
</feature>
<accession>Q9BTX7</accession>
<accession>E1P5X3</accession>
<accession>Q5QPC1</accession>
<accession>Q9H1G2</accession>
<accession>Q9NQG8</accession>
<organism>
    <name type="scientific">Homo sapiens</name>
    <name type="common">Human</name>
    <dbReference type="NCBI Taxonomy" id="9606"/>
    <lineage>
        <taxon>Eukaryota</taxon>
        <taxon>Metazoa</taxon>
        <taxon>Chordata</taxon>
        <taxon>Craniata</taxon>
        <taxon>Vertebrata</taxon>
        <taxon>Euteleostomi</taxon>
        <taxon>Mammalia</taxon>
        <taxon>Eutheria</taxon>
        <taxon>Euarchontoglires</taxon>
        <taxon>Primates</taxon>
        <taxon>Haplorrhini</taxon>
        <taxon>Catarrhini</taxon>
        <taxon>Hominidae</taxon>
        <taxon>Homo</taxon>
    </lineage>
</organism>
<reference key="1">
    <citation type="journal article" date="2001" name="Nature">
        <title>The DNA sequence and comparative analysis of human chromosome 20.</title>
        <authorList>
            <person name="Deloukas P."/>
            <person name="Matthews L.H."/>
            <person name="Ashurst J.L."/>
            <person name="Burton J."/>
            <person name="Gilbert J.G.R."/>
            <person name="Jones M."/>
            <person name="Stavrides G."/>
            <person name="Almeida J.P."/>
            <person name="Babbage A.K."/>
            <person name="Bagguley C.L."/>
            <person name="Bailey J."/>
            <person name="Barlow K.F."/>
            <person name="Bates K.N."/>
            <person name="Beard L.M."/>
            <person name="Beare D.M."/>
            <person name="Beasley O.P."/>
            <person name="Bird C.P."/>
            <person name="Blakey S.E."/>
            <person name="Bridgeman A.M."/>
            <person name="Brown A.J."/>
            <person name="Buck D."/>
            <person name="Burrill W.D."/>
            <person name="Butler A.P."/>
            <person name="Carder C."/>
            <person name="Carter N.P."/>
            <person name="Chapman J.C."/>
            <person name="Clamp M."/>
            <person name="Clark G."/>
            <person name="Clark L.N."/>
            <person name="Clark S.Y."/>
            <person name="Clee C.M."/>
            <person name="Clegg S."/>
            <person name="Cobley V.E."/>
            <person name="Collier R.E."/>
            <person name="Connor R.E."/>
            <person name="Corby N.R."/>
            <person name="Coulson A."/>
            <person name="Coville G.J."/>
            <person name="Deadman R."/>
            <person name="Dhami P.D."/>
            <person name="Dunn M."/>
            <person name="Ellington A.G."/>
            <person name="Frankland J.A."/>
            <person name="Fraser A."/>
            <person name="French L."/>
            <person name="Garner P."/>
            <person name="Grafham D.V."/>
            <person name="Griffiths C."/>
            <person name="Griffiths M.N.D."/>
            <person name="Gwilliam R."/>
            <person name="Hall R.E."/>
            <person name="Hammond S."/>
            <person name="Harley J.L."/>
            <person name="Heath P.D."/>
            <person name="Ho S."/>
            <person name="Holden J.L."/>
            <person name="Howden P.J."/>
            <person name="Huckle E."/>
            <person name="Hunt A.R."/>
            <person name="Hunt S.E."/>
            <person name="Jekosch K."/>
            <person name="Johnson C.M."/>
            <person name="Johnson D."/>
            <person name="Kay M.P."/>
            <person name="Kimberley A.M."/>
            <person name="King A."/>
            <person name="Knights A."/>
            <person name="Laird G.K."/>
            <person name="Lawlor S."/>
            <person name="Lehvaeslaiho M.H."/>
            <person name="Leversha M.A."/>
            <person name="Lloyd C."/>
            <person name="Lloyd D.M."/>
            <person name="Lovell J.D."/>
            <person name="Marsh V.L."/>
            <person name="Martin S.L."/>
            <person name="McConnachie L.J."/>
            <person name="McLay K."/>
            <person name="McMurray A.A."/>
            <person name="Milne S.A."/>
            <person name="Mistry D."/>
            <person name="Moore M.J.F."/>
            <person name="Mullikin J.C."/>
            <person name="Nickerson T."/>
            <person name="Oliver K."/>
            <person name="Parker A."/>
            <person name="Patel R."/>
            <person name="Pearce T.A.V."/>
            <person name="Peck A.I."/>
            <person name="Phillimore B.J.C.T."/>
            <person name="Prathalingam S.R."/>
            <person name="Plumb R.W."/>
            <person name="Ramsay H."/>
            <person name="Rice C.M."/>
            <person name="Ross M.T."/>
            <person name="Scott C.E."/>
            <person name="Sehra H.K."/>
            <person name="Shownkeen R."/>
            <person name="Sims S."/>
            <person name="Skuce C.D."/>
            <person name="Smith M.L."/>
            <person name="Soderlund C."/>
            <person name="Steward C.A."/>
            <person name="Sulston J.E."/>
            <person name="Swann R.M."/>
            <person name="Sycamore N."/>
            <person name="Taylor R."/>
            <person name="Tee L."/>
            <person name="Thomas D.W."/>
            <person name="Thorpe A."/>
            <person name="Tracey A."/>
            <person name="Tromans A.C."/>
            <person name="Vaudin M."/>
            <person name="Wall M."/>
            <person name="Wallis J.M."/>
            <person name="Whitehead S.L."/>
            <person name="Whittaker P."/>
            <person name="Willey D.L."/>
            <person name="Williams L."/>
            <person name="Williams S.A."/>
            <person name="Wilming L."/>
            <person name="Wray P.W."/>
            <person name="Hubbard T."/>
            <person name="Durbin R.M."/>
            <person name="Bentley D.R."/>
            <person name="Beck S."/>
            <person name="Rogers J."/>
        </authorList>
    </citation>
    <scope>NUCLEOTIDE SEQUENCE [LARGE SCALE GENOMIC DNA]</scope>
</reference>
<reference key="2">
    <citation type="submission" date="2005-09" db="EMBL/GenBank/DDBJ databases">
        <authorList>
            <person name="Mural R.J."/>
            <person name="Istrail S."/>
            <person name="Sutton G.G."/>
            <person name="Florea L."/>
            <person name="Halpern A.L."/>
            <person name="Mobarry C.M."/>
            <person name="Lippert R."/>
            <person name="Walenz B."/>
            <person name="Shatkay H."/>
            <person name="Dew I."/>
            <person name="Miller J.R."/>
            <person name="Flanigan M.J."/>
            <person name="Edwards N.J."/>
            <person name="Bolanos R."/>
            <person name="Fasulo D."/>
            <person name="Halldorsson B.V."/>
            <person name="Hannenhalli S."/>
            <person name="Turner R."/>
            <person name="Yooseph S."/>
            <person name="Lu F."/>
            <person name="Nusskern D.R."/>
            <person name="Shue B.C."/>
            <person name="Zheng X.H."/>
            <person name="Zhong F."/>
            <person name="Delcher A.L."/>
            <person name="Huson D.H."/>
            <person name="Kravitz S.A."/>
            <person name="Mouchard L."/>
            <person name="Reinert K."/>
            <person name="Remington K.A."/>
            <person name="Clark A.G."/>
            <person name="Waterman M.S."/>
            <person name="Eichler E.E."/>
            <person name="Adams M.D."/>
            <person name="Hunkapiller M.W."/>
            <person name="Myers E.W."/>
            <person name="Venter J.C."/>
        </authorList>
    </citation>
    <scope>NUCLEOTIDE SEQUENCE [LARGE SCALE GENOMIC DNA]</scope>
</reference>
<reference key="3">
    <citation type="journal article" date="2004" name="Genome Res.">
        <title>The status, quality, and expansion of the NIH full-length cDNA project: the Mammalian Gene Collection (MGC).</title>
        <authorList>
            <consortium name="The MGC Project Team"/>
        </authorList>
    </citation>
    <scope>NUCLEOTIDE SEQUENCE [LARGE SCALE MRNA]</scope>
    <source>
        <tissue>Ovary</tissue>
    </source>
</reference>
<reference key="4">
    <citation type="journal article" date="2014" name="J. Proteomics">
        <title>An enzyme assisted RP-RPLC approach for in-depth analysis of human liver phosphoproteome.</title>
        <authorList>
            <person name="Bian Y."/>
            <person name="Song C."/>
            <person name="Cheng K."/>
            <person name="Dong M."/>
            <person name="Wang F."/>
            <person name="Huang J."/>
            <person name="Sun D."/>
            <person name="Wang L."/>
            <person name="Ye M."/>
            <person name="Zou H."/>
        </authorList>
    </citation>
    <scope>IDENTIFICATION BY MASS SPECTROMETRY [LARGE SCALE ANALYSIS]</scope>
    <source>
        <tissue>Liver</tissue>
    </source>
</reference>
<sequence>MSEESDSLRTSPSVASLSENELPPPPEPPGYVCSLTEDLVTKAREELQEKPEWRLRDVQALRDMVRKEYPNLSTSLDDAFLLRFLRARKFDYDRALQLLVNYHSCRRSWPEVFNNLKPSALKDVLASGFLTVLPHTDPRGCHVVCIRPDRWIPSNYPITENIRAIYLTLEKLIQSEETQVNGIVILADYKGVSLSKASHFGPFIAKKVIGILQDGFPIRIKAVHVVNEPRIFKGIFAIIKPFLKEKIANRFFLHGSDLNSLHTNLPRSILPKEYGGTAGELDTATWNAVLLASEDDFVKEFCQPVPACDSILGQTLLPEGLTSDAQCDDSLRAVKSQLYSCY</sequence>
<evidence type="ECO:0000255" key="1">
    <source>
        <dbReference type="PROSITE-ProRule" id="PRU00056"/>
    </source>
</evidence>
<evidence type="ECO:0000256" key="2">
    <source>
        <dbReference type="SAM" id="MobiDB-lite"/>
    </source>
</evidence>
<evidence type="ECO:0000305" key="3"/>
<name>TTPAL_HUMAN</name>
<keyword id="KW-1267">Proteomics identification</keyword>
<keyword id="KW-1185">Reference proteome</keyword>
<keyword id="KW-0813">Transport</keyword>
<protein>
    <recommendedName>
        <fullName>Alpha-tocopherol transfer protein-like</fullName>
    </recommendedName>
</protein>